<name>RL3_MYCUA</name>
<comment type="function">
    <text evidence="1">One of the primary rRNA binding proteins, it binds directly near the 3'-end of the 23S rRNA, where it nucleates assembly of the 50S subunit.</text>
</comment>
<comment type="subunit">
    <text evidence="1">Part of the 50S ribosomal subunit. Forms a cluster with proteins L14 and L19.</text>
</comment>
<comment type="similarity">
    <text evidence="1">Belongs to the universal ribosomal protein uL3 family.</text>
</comment>
<protein>
    <recommendedName>
        <fullName evidence="1">Large ribosomal subunit protein uL3</fullName>
    </recommendedName>
    <alternativeName>
        <fullName evidence="2">50S ribosomal protein L3</fullName>
    </alternativeName>
</protein>
<organism>
    <name type="scientific">Mycobacterium ulcerans (strain Agy99)</name>
    <dbReference type="NCBI Taxonomy" id="362242"/>
    <lineage>
        <taxon>Bacteria</taxon>
        <taxon>Bacillati</taxon>
        <taxon>Actinomycetota</taxon>
        <taxon>Actinomycetes</taxon>
        <taxon>Mycobacteriales</taxon>
        <taxon>Mycobacteriaceae</taxon>
        <taxon>Mycobacterium</taxon>
        <taxon>Mycobacterium ulcerans group</taxon>
    </lineage>
</organism>
<proteinExistence type="inferred from homology"/>
<reference key="1">
    <citation type="journal article" date="2007" name="Genome Res.">
        <title>Reductive evolution and niche adaptation inferred from the genome of Mycobacterium ulcerans, the causative agent of Buruli ulcer.</title>
        <authorList>
            <person name="Stinear T.P."/>
            <person name="Seemann T."/>
            <person name="Pidot S."/>
            <person name="Frigui W."/>
            <person name="Reysset G."/>
            <person name="Garnier T."/>
            <person name="Meurice G."/>
            <person name="Simon D."/>
            <person name="Bouchier C."/>
            <person name="Ma L."/>
            <person name="Tichit M."/>
            <person name="Porter J.L."/>
            <person name="Ryan J."/>
            <person name="Johnson P.D.R."/>
            <person name="Davies J.K."/>
            <person name="Jenkin G.A."/>
            <person name="Small P.L.C."/>
            <person name="Jones L.M."/>
            <person name="Tekaia F."/>
            <person name="Laval F."/>
            <person name="Daffe M."/>
            <person name="Parkhill J."/>
            <person name="Cole S.T."/>
        </authorList>
    </citation>
    <scope>NUCLEOTIDE SEQUENCE [LARGE SCALE GENOMIC DNA]</scope>
    <source>
        <strain>Agy99</strain>
    </source>
</reference>
<evidence type="ECO:0000255" key="1">
    <source>
        <dbReference type="HAMAP-Rule" id="MF_01325"/>
    </source>
</evidence>
<evidence type="ECO:0000305" key="2"/>
<sequence>MARKGILGTKLGMTQVFDENNKVVPVTVVKAGPNVVTRIRTPERDGYSAVQLAYGEISPRKVNKPVTGQYTAAGVNPRRHLAELRLDDAEAVTEYEVGQELTAEIFADGSYVDVTGTSKGKGFAGTMKRHGFSGQGASHGAQAVHRRPGSIGGCATPARVFKGTRMAGRMGNDRVTVQNLLVHKVDAEQSVLLIKGAVPGRTGGLVTVRSAIKRGEK</sequence>
<accession>A0PM63</accession>
<dbReference type="EMBL" id="CP000325">
    <property type="protein sequence ID" value="ABL03432.1"/>
    <property type="molecule type" value="Genomic_DNA"/>
</dbReference>
<dbReference type="RefSeq" id="WP_011739057.1">
    <property type="nucleotide sequence ID" value="NC_008611.1"/>
</dbReference>
<dbReference type="SMR" id="A0PM63"/>
<dbReference type="KEGG" id="mul:MUL_0790"/>
<dbReference type="eggNOG" id="COG0087">
    <property type="taxonomic scope" value="Bacteria"/>
</dbReference>
<dbReference type="HOGENOM" id="CLU_044142_4_1_11"/>
<dbReference type="Proteomes" id="UP000000765">
    <property type="component" value="Chromosome"/>
</dbReference>
<dbReference type="GO" id="GO:0022625">
    <property type="term" value="C:cytosolic large ribosomal subunit"/>
    <property type="evidence" value="ECO:0007669"/>
    <property type="project" value="TreeGrafter"/>
</dbReference>
<dbReference type="GO" id="GO:0019843">
    <property type="term" value="F:rRNA binding"/>
    <property type="evidence" value="ECO:0007669"/>
    <property type="project" value="UniProtKB-UniRule"/>
</dbReference>
<dbReference type="GO" id="GO:0003735">
    <property type="term" value="F:structural constituent of ribosome"/>
    <property type="evidence" value="ECO:0007669"/>
    <property type="project" value="InterPro"/>
</dbReference>
<dbReference type="GO" id="GO:0006412">
    <property type="term" value="P:translation"/>
    <property type="evidence" value="ECO:0007669"/>
    <property type="project" value="UniProtKB-UniRule"/>
</dbReference>
<dbReference type="FunFam" id="2.40.30.10:FF:000004">
    <property type="entry name" value="50S ribosomal protein L3"/>
    <property type="match status" value="1"/>
</dbReference>
<dbReference type="FunFam" id="3.30.160.810:FF:000001">
    <property type="entry name" value="50S ribosomal protein L3"/>
    <property type="match status" value="1"/>
</dbReference>
<dbReference type="Gene3D" id="3.30.160.810">
    <property type="match status" value="1"/>
</dbReference>
<dbReference type="Gene3D" id="2.40.30.10">
    <property type="entry name" value="Translation factors"/>
    <property type="match status" value="1"/>
</dbReference>
<dbReference type="HAMAP" id="MF_01325_B">
    <property type="entry name" value="Ribosomal_uL3_B"/>
    <property type="match status" value="1"/>
</dbReference>
<dbReference type="InterPro" id="IPR000597">
    <property type="entry name" value="Ribosomal_uL3"/>
</dbReference>
<dbReference type="InterPro" id="IPR019927">
    <property type="entry name" value="Ribosomal_uL3_bac/org-type"/>
</dbReference>
<dbReference type="InterPro" id="IPR019926">
    <property type="entry name" value="Ribosomal_uL3_CS"/>
</dbReference>
<dbReference type="InterPro" id="IPR009000">
    <property type="entry name" value="Transl_B-barrel_sf"/>
</dbReference>
<dbReference type="NCBIfam" id="TIGR03625">
    <property type="entry name" value="L3_bact"/>
    <property type="match status" value="1"/>
</dbReference>
<dbReference type="PANTHER" id="PTHR11229">
    <property type="entry name" value="50S RIBOSOMAL PROTEIN L3"/>
    <property type="match status" value="1"/>
</dbReference>
<dbReference type="PANTHER" id="PTHR11229:SF16">
    <property type="entry name" value="LARGE RIBOSOMAL SUBUNIT PROTEIN UL3C"/>
    <property type="match status" value="1"/>
</dbReference>
<dbReference type="Pfam" id="PF00297">
    <property type="entry name" value="Ribosomal_L3"/>
    <property type="match status" value="1"/>
</dbReference>
<dbReference type="SUPFAM" id="SSF50447">
    <property type="entry name" value="Translation proteins"/>
    <property type="match status" value="1"/>
</dbReference>
<dbReference type="PROSITE" id="PS00474">
    <property type="entry name" value="RIBOSOMAL_L3"/>
    <property type="match status" value="1"/>
</dbReference>
<gene>
    <name evidence="1" type="primary">rplC</name>
    <name type="ordered locus">MUL_0790</name>
</gene>
<feature type="chain" id="PRO_1000052093" description="Large ribosomal subunit protein uL3">
    <location>
        <begin position="1"/>
        <end position="217"/>
    </location>
</feature>
<keyword id="KW-0687">Ribonucleoprotein</keyword>
<keyword id="KW-0689">Ribosomal protein</keyword>
<keyword id="KW-0694">RNA-binding</keyword>
<keyword id="KW-0699">rRNA-binding</keyword>